<organism>
    <name type="scientific">Methanosarcina barkeri (strain Fusaro / DSM 804)</name>
    <dbReference type="NCBI Taxonomy" id="269797"/>
    <lineage>
        <taxon>Archaea</taxon>
        <taxon>Methanobacteriati</taxon>
        <taxon>Methanobacteriota</taxon>
        <taxon>Stenosarchaea group</taxon>
        <taxon>Methanomicrobia</taxon>
        <taxon>Methanosarcinales</taxon>
        <taxon>Methanosarcinaceae</taxon>
        <taxon>Methanosarcina</taxon>
    </lineage>
</organism>
<sequence length="291" mass="30934">MFEGAMPALITPFTKDDRIDREGLQRNIEFVEEGGVAGIVPCGTTGESATLSALEHEEVIDIAVECSKVPVIAGTGSNNTGEALQFTKHAADAGVDGVLLISPYYNKPNPAGLLTHFKKIAEAVDVPMVMYNIPSRTGQDMPLEVIVELAKVENIVGIKEASGNIGKVSQILENTIDEDFVVISGEDNLTLPILSVGGQGVISVAANIVPDRMSRMVNAALAGDYETARKIHFEIAPLIRALFLETNPIPVKKAAELAGLASGNLRLPLAPLSETNTQKVADELRKLGVIE</sequence>
<proteinExistence type="inferred from homology"/>
<comment type="function">
    <text evidence="1">Catalyzes the condensation of (S)-aspartate-beta-semialdehyde [(S)-ASA] and pyruvate to 4-hydroxy-tetrahydrodipicolinate (HTPA).</text>
</comment>
<comment type="catalytic activity">
    <reaction evidence="1">
        <text>L-aspartate 4-semialdehyde + pyruvate = (2S,4S)-4-hydroxy-2,3,4,5-tetrahydrodipicolinate + H2O + H(+)</text>
        <dbReference type="Rhea" id="RHEA:34171"/>
        <dbReference type="ChEBI" id="CHEBI:15361"/>
        <dbReference type="ChEBI" id="CHEBI:15377"/>
        <dbReference type="ChEBI" id="CHEBI:15378"/>
        <dbReference type="ChEBI" id="CHEBI:67139"/>
        <dbReference type="ChEBI" id="CHEBI:537519"/>
        <dbReference type="EC" id="4.3.3.7"/>
    </reaction>
</comment>
<comment type="pathway">
    <text evidence="1">Amino-acid biosynthesis; L-lysine biosynthesis via DAP pathway; (S)-tetrahydrodipicolinate from L-aspartate: step 3/4.</text>
</comment>
<comment type="subunit">
    <text evidence="1">Homotetramer; dimer of dimers.</text>
</comment>
<comment type="subcellular location">
    <subcellularLocation>
        <location evidence="1">Cytoplasm</location>
    </subcellularLocation>
</comment>
<comment type="similarity">
    <text evidence="1">Belongs to the DapA family.</text>
</comment>
<comment type="caution">
    <text evidence="2">Was originally thought to be a dihydrodipicolinate synthase (DHDPS), catalyzing the condensation of (S)-aspartate-beta-semialdehyde [(S)-ASA] and pyruvate to dihydrodipicolinate (DHDP). However, it was shown in E.coli that the product of the enzymatic reaction is not dihydrodipicolinate but in fact (4S)-4-hydroxy-2,3,4,5-tetrahydro-(2S)-dipicolinic acid (HTPA), and that the consecutive dehydration reaction leading to DHDP is not spontaneous but catalyzed by DapB.</text>
</comment>
<feature type="chain" id="PRO_1000050213" description="4-hydroxy-tetrahydrodipicolinate synthase">
    <location>
        <begin position="1"/>
        <end position="291"/>
    </location>
</feature>
<feature type="active site" description="Proton donor/acceptor" evidence="1">
    <location>
        <position position="131"/>
    </location>
</feature>
<feature type="active site" description="Schiff-base intermediate with substrate" evidence="1">
    <location>
        <position position="159"/>
    </location>
</feature>
<feature type="binding site" evidence="1">
    <location>
        <position position="45"/>
    </location>
    <ligand>
        <name>pyruvate</name>
        <dbReference type="ChEBI" id="CHEBI:15361"/>
    </ligand>
</feature>
<feature type="binding site" evidence="1">
    <location>
        <position position="202"/>
    </location>
    <ligand>
        <name>pyruvate</name>
        <dbReference type="ChEBI" id="CHEBI:15361"/>
    </ligand>
</feature>
<feature type="site" description="Part of a proton relay during catalysis" evidence="1">
    <location>
        <position position="44"/>
    </location>
</feature>
<feature type="site" description="Part of a proton relay during catalysis" evidence="1">
    <location>
        <position position="105"/>
    </location>
</feature>
<gene>
    <name evidence="1" type="primary">dapA</name>
    <name type="ordered locus">Mbar_A1150</name>
</gene>
<protein>
    <recommendedName>
        <fullName evidence="1">4-hydroxy-tetrahydrodipicolinate synthase</fullName>
        <shortName evidence="1">HTPA synthase</shortName>
        <ecNumber evidence="1">4.3.3.7</ecNumber>
    </recommendedName>
</protein>
<evidence type="ECO:0000255" key="1">
    <source>
        <dbReference type="HAMAP-Rule" id="MF_00418"/>
    </source>
</evidence>
<evidence type="ECO:0000305" key="2"/>
<reference key="1">
    <citation type="journal article" date="2006" name="J. Bacteriol.">
        <title>The Methanosarcina barkeri genome: comparative analysis with Methanosarcina acetivorans and Methanosarcina mazei reveals extensive rearrangement within methanosarcinal genomes.</title>
        <authorList>
            <person name="Maeder D.L."/>
            <person name="Anderson I."/>
            <person name="Brettin T.S."/>
            <person name="Bruce D.C."/>
            <person name="Gilna P."/>
            <person name="Han C.S."/>
            <person name="Lapidus A."/>
            <person name="Metcalf W.W."/>
            <person name="Saunders E."/>
            <person name="Tapia R."/>
            <person name="Sowers K.R."/>
        </authorList>
    </citation>
    <scope>NUCLEOTIDE SEQUENCE [LARGE SCALE GENOMIC DNA]</scope>
    <source>
        <strain>Fusaro / DSM 804</strain>
    </source>
</reference>
<dbReference type="EC" id="4.3.3.7" evidence="1"/>
<dbReference type="EMBL" id="CP000099">
    <property type="protein sequence ID" value="AAZ70118.1"/>
    <property type="molecule type" value="Genomic_DNA"/>
</dbReference>
<dbReference type="SMR" id="Q46DC4"/>
<dbReference type="STRING" id="269797.Mbar_A1150"/>
<dbReference type="PaxDb" id="269797-Mbar_A1150"/>
<dbReference type="KEGG" id="mba:Mbar_A1150"/>
<dbReference type="eggNOG" id="arCOG04172">
    <property type="taxonomic scope" value="Archaea"/>
</dbReference>
<dbReference type="HOGENOM" id="CLU_049343_7_0_2"/>
<dbReference type="OrthoDB" id="33636at2157"/>
<dbReference type="UniPathway" id="UPA00034">
    <property type="reaction ID" value="UER00017"/>
</dbReference>
<dbReference type="GO" id="GO:0005737">
    <property type="term" value="C:cytoplasm"/>
    <property type="evidence" value="ECO:0007669"/>
    <property type="project" value="UniProtKB-SubCell"/>
</dbReference>
<dbReference type="GO" id="GO:0008675">
    <property type="term" value="F:2-dehydro-3-deoxy-phosphogluconate aldolase activity"/>
    <property type="evidence" value="ECO:0007669"/>
    <property type="project" value="UniProtKB-ARBA"/>
</dbReference>
<dbReference type="GO" id="GO:0008840">
    <property type="term" value="F:4-hydroxy-tetrahydrodipicolinate synthase activity"/>
    <property type="evidence" value="ECO:0007669"/>
    <property type="project" value="UniProtKB-UniRule"/>
</dbReference>
<dbReference type="GO" id="GO:0019877">
    <property type="term" value="P:diaminopimelate biosynthetic process"/>
    <property type="evidence" value="ECO:0007669"/>
    <property type="project" value="UniProtKB-UniRule"/>
</dbReference>
<dbReference type="GO" id="GO:0009089">
    <property type="term" value="P:lysine biosynthetic process via diaminopimelate"/>
    <property type="evidence" value="ECO:0007669"/>
    <property type="project" value="UniProtKB-UniRule"/>
</dbReference>
<dbReference type="CDD" id="cd00950">
    <property type="entry name" value="DHDPS"/>
    <property type="match status" value="1"/>
</dbReference>
<dbReference type="Gene3D" id="3.20.20.70">
    <property type="entry name" value="Aldolase class I"/>
    <property type="match status" value="1"/>
</dbReference>
<dbReference type="HAMAP" id="MF_00418">
    <property type="entry name" value="DapA"/>
    <property type="match status" value="1"/>
</dbReference>
<dbReference type="InterPro" id="IPR013785">
    <property type="entry name" value="Aldolase_TIM"/>
</dbReference>
<dbReference type="InterPro" id="IPR005263">
    <property type="entry name" value="DapA"/>
</dbReference>
<dbReference type="InterPro" id="IPR002220">
    <property type="entry name" value="DapA-like"/>
</dbReference>
<dbReference type="InterPro" id="IPR020625">
    <property type="entry name" value="Schiff_base-form_aldolases_AS"/>
</dbReference>
<dbReference type="InterPro" id="IPR020624">
    <property type="entry name" value="Schiff_base-form_aldolases_CS"/>
</dbReference>
<dbReference type="NCBIfam" id="TIGR00674">
    <property type="entry name" value="dapA"/>
    <property type="match status" value="1"/>
</dbReference>
<dbReference type="PANTHER" id="PTHR12128:SF66">
    <property type="entry name" value="4-HYDROXY-2-OXOGLUTARATE ALDOLASE, MITOCHONDRIAL"/>
    <property type="match status" value="1"/>
</dbReference>
<dbReference type="PANTHER" id="PTHR12128">
    <property type="entry name" value="DIHYDRODIPICOLINATE SYNTHASE"/>
    <property type="match status" value="1"/>
</dbReference>
<dbReference type="Pfam" id="PF00701">
    <property type="entry name" value="DHDPS"/>
    <property type="match status" value="1"/>
</dbReference>
<dbReference type="PIRSF" id="PIRSF001365">
    <property type="entry name" value="DHDPS"/>
    <property type="match status" value="1"/>
</dbReference>
<dbReference type="PRINTS" id="PR00146">
    <property type="entry name" value="DHPICSNTHASE"/>
</dbReference>
<dbReference type="SMART" id="SM01130">
    <property type="entry name" value="DHDPS"/>
    <property type="match status" value="1"/>
</dbReference>
<dbReference type="SUPFAM" id="SSF51569">
    <property type="entry name" value="Aldolase"/>
    <property type="match status" value="1"/>
</dbReference>
<dbReference type="PROSITE" id="PS00665">
    <property type="entry name" value="DHDPS_1"/>
    <property type="match status" value="1"/>
</dbReference>
<dbReference type="PROSITE" id="PS00666">
    <property type="entry name" value="DHDPS_2"/>
    <property type="match status" value="1"/>
</dbReference>
<name>DAPA_METBF</name>
<accession>Q46DC4</accession>
<keyword id="KW-0028">Amino-acid biosynthesis</keyword>
<keyword id="KW-0963">Cytoplasm</keyword>
<keyword id="KW-0220">Diaminopimelate biosynthesis</keyword>
<keyword id="KW-0456">Lyase</keyword>
<keyword id="KW-0457">Lysine biosynthesis</keyword>
<keyword id="KW-0704">Schiff base</keyword>